<gene>
    <name evidence="1" type="primary">pyrR</name>
    <name type="ordered locus">STER_0555</name>
</gene>
<keyword id="KW-0328">Glycosyltransferase</keyword>
<keyword id="KW-0694">RNA-binding</keyword>
<keyword id="KW-0804">Transcription</keyword>
<keyword id="KW-0805">Transcription regulation</keyword>
<keyword id="KW-0806">Transcription termination</keyword>
<keyword id="KW-0808">Transferase</keyword>
<proteinExistence type="inferred from homology"/>
<name>PYRR_STRTD</name>
<evidence type="ECO:0000255" key="1">
    <source>
        <dbReference type="HAMAP-Rule" id="MF_01219"/>
    </source>
</evidence>
<sequence length="173" mass="19529">MKKKEIVDDVTMKRAITRITYEIIERNKNLDKIVLAGIKTRGVYIAQRIQERLKQLENLDVPLIELDTKAYRDDVKSEQDTSLILIEIDGTDVILVDDVLYTGRTIRAAIDNIVSHGRPARVGLAVLVDRGHRELPIRADYVGKNIPTSQSEEIEVLVTEVDGKDSVNIIDPN</sequence>
<organism>
    <name type="scientific">Streptococcus thermophilus (strain ATCC BAA-491 / LMD-9)</name>
    <dbReference type="NCBI Taxonomy" id="322159"/>
    <lineage>
        <taxon>Bacteria</taxon>
        <taxon>Bacillati</taxon>
        <taxon>Bacillota</taxon>
        <taxon>Bacilli</taxon>
        <taxon>Lactobacillales</taxon>
        <taxon>Streptococcaceae</taxon>
        <taxon>Streptococcus</taxon>
    </lineage>
</organism>
<dbReference type="EC" id="2.4.2.9" evidence="1"/>
<dbReference type="EMBL" id="CP000419">
    <property type="protein sequence ID" value="ABJ65830.1"/>
    <property type="molecule type" value="Genomic_DNA"/>
</dbReference>
<dbReference type="RefSeq" id="WP_011680857.1">
    <property type="nucleotide sequence ID" value="NC_008532.1"/>
</dbReference>
<dbReference type="SMR" id="Q03LU2"/>
<dbReference type="KEGG" id="ste:STER_0555"/>
<dbReference type="HOGENOM" id="CLU_094234_2_1_9"/>
<dbReference type="GO" id="GO:0003723">
    <property type="term" value="F:RNA binding"/>
    <property type="evidence" value="ECO:0007669"/>
    <property type="project" value="UniProtKB-UniRule"/>
</dbReference>
<dbReference type="GO" id="GO:0004845">
    <property type="term" value="F:uracil phosphoribosyltransferase activity"/>
    <property type="evidence" value="ECO:0007669"/>
    <property type="project" value="UniProtKB-UniRule"/>
</dbReference>
<dbReference type="GO" id="GO:0006353">
    <property type="term" value="P:DNA-templated transcription termination"/>
    <property type="evidence" value="ECO:0007669"/>
    <property type="project" value="UniProtKB-UniRule"/>
</dbReference>
<dbReference type="CDD" id="cd06223">
    <property type="entry name" value="PRTases_typeI"/>
    <property type="match status" value="1"/>
</dbReference>
<dbReference type="FunFam" id="3.40.50.2020:FF:000020">
    <property type="entry name" value="Bifunctional protein PyrR"/>
    <property type="match status" value="1"/>
</dbReference>
<dbReference type="Gene3D" id="3.40.50.2020">
    <property type="match status" value="1"/>
</dbReference>
<dbReference type="HAMAP" id="MF_01219">
    <property type="entry name" value="PyrR"/>
    <property type="match status" value="1"/>
</dbReference>
<dbReference type="InterPro" id="IPR000836">
    <property type="entry name" value="PRibTrfase_dom"/>
</dbReference>
<dbReference type="InterPro" id="IPR029057">
    <property type="entry name" value="PRTase-like"/>
</dbReference>
<dbReference type="InterPro" id="IPR023050">
    <property type="entry name" value="PyrR"/>
</dbReference>
<dbReference type="InterPro" id="IPR050137">
    <property type="entry name" value="PyrR_bifunctional"/>
</dbReference>
<dbReference type="NCBIfam" id="NF003548">
    <property type="entry name" value="PRK05205.1-4"/>
    <property type="match status" value="1"/>
</dbReference>
<dbReference type="NCBIfam" id="NF003549">
    <property type="entry name" value="PRK05205.1-5"/>
    <property type="match status" value="1"/>
</dbReference>
<dbReference type="PANTHER" id="PTHR11608">
    <property type="entry name" value="BIFUNCTIONAL PROTEIN PYRR"/>
    <property type="match status" value="1"/>
</dbReference>
<dbReference type="PANTHER" id="PTHR11608:SF0">
    <property type="entry name" value="BIFUNCTIONAL PROTEIN PYRR"/>
    <property type="match status" value="1"/>
</dbReference>
<dbReference type="Pfam" id="PF00156">
    <property type="entry name" value="Pribosyltran"/>
    <property type="match status" value="1"/>
</dbReference>
<dbReference type="SUPFAM" id="SSF53271">
    <property type="entry name" value="PRTase-like"/>
    <property type="match status" value="1"/>
</dbReference>
<accession>Q03LU2</accession>
<comment type="function">
    <text evidence="1">Regulates transcriptional attenuation of the pyrimidine nucleotide (pyr) operon by binding in a uridine-dependent manner to specific sites on pyr mRNA. This disrupts an antiterminator hairpin in the RNA and favors formation of a downstream transcription terminator, leading to a reduced expression of downstream genes.</text>
</comment>
<comment type="function">
    <text evidence="1">Also displays a weak uracil phosphoribosyltransferase activity which is not physiologically significant.</text>
</comment>
<comment type="catalytic activity">
    <reaction evidence="1">
        <text>UMP + diphosphate = 5-phospho-alpha-D-ribose 1-diphosphate + uracil</text>
        <dbReference type="Rhea" id="RHEA:13017"/>
        <dbReference type="ChEBI" id="CHEBI:17568"/>
        <dbReference type="ChEBI" id="CHEBI:33019"/>
        <dbReference type="ChEBI" id="CHEBI:57865"/>
        <dbReference type="ChEBI" id="CHEBI:58017"/>
        <dbReference type="EC" id="2.4.2.9"/>
    </reaction>
</comment>
<comment type="subunit">
    <text evidence="1">Homodimer and homohexamer; in equilibrium.</text>
</comment>
<comment type="similarity">
    <text evidence="1">Belongs to the purine/pyrimidine phosphoribosyltransferase family. PyrR subfamily.</text>
</comment>
<feature type="chain" id="PRO_1000053879" description="Bifunctional protein PyrR">
    <location>
        <begin position="1"/>
        <end position="173"/>
    </location>
</feature>
<feature type="short sequence motif" description="PRPP-binding" evidence="1">
    <location>
        <begin position="93"/>
        <end position="105"/>
    </location>
</feature>
<protein>
    <recommendedName>
        <fullName evidence="1">Bifunctional protein PyrR</fullName>
    </recommendedName>
    <domain>
        <recommendedName>
            <fullName evidence="1">Pyrimidine operon regulatory protein</fullName>
        </recommendedName>
    </domain>
    <domain>
        <recommendedName>
            <fullName evidence="1">Uracil phosphoribosyltransferase</fullName>
            <shortName evidence="1">UPRTase</shortName>
            <ecNumber evidence="1">2.4.2.9</ecNumber>
        </recommendedName>
    </domain>
</protein>
<reference key="1">
    <citation type="journal article" date="2006" name="Proc. Natl. Acad. Sci. U.S.A.">
        <title>Comparative genomics of the lactic acid bacteria.</title>
        <authorList>
            <person name="Makarova K.S."/>
            <person name="Slesarev A."/>
            <person name="Wolf Y.I."/>
            <person name="Sorokin A."/>
            <person name="Mirkin B."/>
            <person name="Koonin E.V."/>
            <person name="Pavlov A."/>
            <person name="Pavlova N."/>
            <person name="Karamychev V."/>
            <person name="Polouchine N."/>
            <person name="Shakhova V."/>
            <person name="Grigoriev I."/>
            <person name="Lou Y."/>
            <person name="Rohksar D."/>
            <person name="Lucas S."/>
            <person name="Huang K."/>
            <person name="Goodstein D.M."/>
            <person name="Hawkins T."/>
            <person name="Plengvidhya V."/>
            <person name="Welker D."/>
            <person name="Hughes J."/>
            <person name="Goh Y."/>
            <person name="Benson A."/>
            <person name="Baldwin K."/>
            <person name="Lee J.-H."/>
            <person name="Diaz-Muniz I."/>
            <person name="Dosti B."/>
            <person name="Smeianov V."/>
            <person name="Wechter W."/>
            <person name="Barabote R."/>
            <person name="Lorca G."/>
            <person name="Altermann E."/>
            <person name="Barrangou R."/>
            <person name="Ganesan B."/>
            <person name="Xie Y."/>
            <person name="Rawsthorne H."/>
            <person name="Tamir D."/>
            <person name="Parker C."/>
            <person name="Breidt F."/>
            <person name="Broadbent J.R."/>
            <person name="Hutkins R."/>
            <person name="O'Sullivan D."/>
            <person name="Steele J."/>
            <person name="Unlu G."/>
            <person name="Saier M.H. Jr."/>
            <person name="Klaenhammer T."/>
            <person name="Richardson P."/>
            <person name="Kozyavkin S."/>
            <person name="Weimer B.C."/>
            <person name="Mills D.A."/>
        </authorList>
    </citation>
    <scope>NUCLEOTIDE SEQUENCE [LARGE SCALE GENOMIC DNA]</scope>
    <source>
        <strain>ATCC BAA-491 / LMD-9</strain>
    </source>
</reference>